<evidence type="ECO:0000255" key="1">
    <source>
        <dbReference type="HAMAP-Rule" id="MF_00564"/>
    </source>
</evidence>
<dbReference type="EC" id="2.7.7.56" evidence="1"/>
<dbReference type="EMBL" id="CP000384">
    <property type="protein sequence ID" value="ABG09949.1"/>
    <property type="molecule type" value="Genomic_DNA"/>
</dbReference>
<dbReference type="SMR" id="Q1B585"/>
<dbReference type="KEGG" id="mmc:Mmcs_3844"/>
<dbReference type="HOGENOM" id="CLU_050858_0_0_11"/>
<dbReference type="BioCyc" id="MSP164756:G1G6O-3925-MONOMER"/>
<dbReference type="GO" id="GO:0000175">
    <property type="term" value="F:3'-5'-RNA exonuclease activity"/>
    <property type="evidence" value="ECO:0007669"/>
    <property type="project" value="UniProtKB-UniRule"/>
</dbReference>
<dbReference type="GO" id="GO:0000049">
    <property type="term" value="F:tRNA binding"/>
    <property type="evidence" value="ECO:0007669"/>
    <property type="project" value="UniProtKB-UniRule"/>
</dbReference>
<dbReference type="GO" id="GO:0009022">
    <property type="term" value="F:tRNA nucleotidyltransferase activity"/>
    <property type="evidence" value="ECO:0007669"/>
    <property type="project" value="UniProtKB-UniRule"/>
</dbReference>
<dbReference type="GO" id="GO:0016075">
    <property type="term" value="P:rRNA catabolic process"/>
    <property type="evidence" value="ECO:0007669"/>
    <property type="project" value="UniProtKB-UniRule"/>
</dbReference>
<dbReference type="GO" id="GO:0006364">
    <property type="term" value="P:rRNA processing"/>
    <property type="evidence" value="ECO:0007669"/>
    <property type="project" value="UniProtKB-KW"/>
</dbReference>
<dbReference type="GO" id="GO:0008033">
    <property type="term" value="P:tRNA processing"/>
    <property type="evidence" value="ECO:0007669"/>
    <property type="project" value="UniProtKB-UniRule"/>
</dbReference>
<dbReference type="FunFam" id="3.30.230.70:FF:000003">
    <property type="entry name" value="Ribonuclease PH"/>
    <property type="match status" value="1"/>
</dbReference>
<dbReference type="Gene3D" id="3.30.230.70">
    <property type="entry name" value="GHMP Kinase, N-terminal domain"/>
    <property type="match status" value="1"/>
</dbReference>
<dbReference type="HAMAP" id="MF_00564">
    <property type="entry name" value="RNase_PH"/>
    <property type="match status" value="1"/>
</dbReference>
<dbReference type="InterPro" id="IPR001247">
    <property type="entry name" value="ExoRNase_PH_dom1"/>
</dbReference>
<dbReference type="InterPro" id="IPR015847">
    <property type="entry name" value="ExoRNase_PH_dom2"/>
</dbReference>
<dbReference type="InterPro" id="IPR036345">
    <property type="entry name" value="ExoRNase_PH_dom2_sf"/>
</dbReference>
<dbReference type="InterPro" id="IPR027408">
    <property type="entry name" value="PNPase/RNase_PH_dom_sf"/>
</dbReference>
<dbReference type="InterPro" id="IPR020568">
    <property type="entry name" value="Ribosomal_Su5_D2-typ_SF"/>
</dbReference>
<dbReference type="InterPro" id="IPR050080">
    <property type="entry name" value="RNase_PH"/>
</dbReference>
<dbReference type="InterPro" id="IPR002381">
    <property type="entry name" value="RNase_PH_bac-type"/>
</dbReference>
<dbReference type="InterPro" id="IPR018336">
    <property type="entry name" value="RNase_PH_CS"/>
</dbReference>
<dbReference type="NCBIfam" id="TIGR01966">
    <property type="entry name" value="RNasePH"/>
    <property type="match status" value="1"/>
</dbReference>
<dbReference type="PANTHER" id="PTHR11953">
    <property type="entry name" value="EXOSOME COMPLEX COMPONENT"/>
    <property type="match status" value="1"/>
</dbReference>
<dbReference type="PANTHER" id="PTHR11953:SF0">
    <property type="entry name" value="EXOSOME COMPLEX COMPONENT RRP41"/>
    <property type="match status" value="1"/>
</dbReference>
<dbReference type="Pfam" id="PF01138">
    <property type="entry name" value="RNase_PH"/>
    <property type="match status" value="1"/>
</dbReference>
<dbReference type="Pfam" id="PF03725">
    <property type="entry name" value="RNase_PH_C"/>
    <property type="match status" value="1"/>
</dbReference>
<dbReference type="SUPFAM" id="SSF55666">
    <property type="entry name" value="Ribonuclease PH domain 2-like"/>
    <property type="match status" value="1"/>
</dbReference>
<dbReference type="SUPFAM" id="SSF54211">
    <property type="entry name" value="Ribosomal protein S5 domain 2-like"/>
    <property type="match status" value="1"/>
</dbReference>
<dbReference type="PROSITE" id="PS01277">
    <property type="entry name" value="RIBONUCLEASE_PH"/>
    <property type="match status" value="1"/>
</dbReference>
<gene>
    <name evidence="1" type="primary">rph</name>
    <name type="ordered locus">Mmcs_3844</name>
</gene>
<keyword id="KW-0548">Nucleotidyltransferase</keyword>
<keyword id="KW-0694">RNA-binding</keyword>
<keyword id="KW-0698">rRNA processing</keyword>
<keyword id="KW-0808">Transferase</keyword>
<keyword id="KW-0819">tRNA processing</keyword>
<keyword id="KW-0820">tRNA-binding</keyword>
<sequence length="260" mass="27647">MSRREDGRLDDELRPVRITRGFTSHPAGSVLVEFGETRVMCTASVTEGVPRWRKGTGQGWLTAEYAMLPAATHDRSDRESVKGRVGGRTQEISRLIGRSLRACIDLNALGENTIAIDCDVLQADGGTRTAAITGAYVALADAVTYLAAAEKLSDPRPLSCAIAAVSVGVVDGRVRVDLPYSEDSRAEVDMNVVATDTGTLVEIQGTGEGATFPRSTLDKLLDLALASCDQLFVVQREALDAPYPGALPEPTSPPKKAFGS</sequence>
<accession>Q1B585</accession>
<proteinExistence type="inferred from homology"/>
<comment type="function">
    <text evidence="1">Phosphorolytic 3'-5' exoribonuclease that plays an important role in tRNA 3'-end maturation. Removes nucleotide residues following the 3'-CCA terminus of tRNAs; can also add nucleotides to the ends of RNA molecules by using nucleoside diphosphates as substrates, but this may not be physiologically important. Probably plays a role in initiation of 16S rRNA degradation (leading to ribosome degradation) during starvation.</text>
</comment>
<comment type="catalytic activity">
    <reaction evidence="1">
        <text>tRNA(n+1) + phosphate = tRNA(n) + a ribonucleoside 5'-diphosphate</text>
        <dbReference type="Rhea" id="RHEA:10628"/>
        <dbReference type="Rhea" id="RHEA-COMP:17343"/>
        <dbReference type="Rhea" id="RHEA-COMP:17344"/>
        <dbReference type="ChEBI" id="CHEBI:43474"/>
        <dbReference type="ChEBI" id="CHEBI:57930"/>
        <dbReference type="ChEBI" id="CHEBI:173114"/>
        <dbReference type="EC" id="2.7.7.56"/>
    </reaction>
</comment>
<comment type="subunit">
    <text evidence="1">Homohexameric ring arranged as a trimer of dimers.</text>
</comment>
<comment type="similarity">
    <text evidence="1">Belongs to the RNase PH family.</text>
</comment>
<name>RNPH_MYCSS</name>
<reference key="1">
    <citation type="submission" date="2006-06" db="EMBL/GenBank/DDBJ databases">
        <title>Complete sequence of chromosome of Mycobacterium sp. MCS.</title>
        <authorList>
            <consortium name="US DOE Joint Genome Institute"/>
            <person name="Copeland A."/>
            <person name="Lucas S."/>
            <person name="Lapidus A."/>
            <person name="Barry K."/>
            <person name="Detter J.C."/>
            <person name="Glavina del Rio T."/>
            <person name="Hammon N."/>
            <person name="Israni S."/>
            <person name="Dalin E."/>
            <person name="Tice H."/>
            <person name="Pitluck S."/>
            <person name="Martinez M."/>
            <person name="Schmutz J."/>
            <person name="Larimer F."/>
            <person name="Land M."/>
            <person name="Hauser L."/>
            <person name="Kyrpides N."/>
            <person name="Kim E."/>
            <person name="Miller C.D."/>
            <person name="Hughes J.E."/>
            <person name="Anderson A.J."/>
            <person name="Sims R.C."/>
            <person name="Richardson P."/>
        </authorList>
    </citation>
    <scope>NUCLEOTIDE SEQUENCE [LARGE SCALE GENOMIC DNA]</scope>
    <source>
        <strain>MCS</strain>
    </source>
</reference>
<protein>
    <recommendedName>
        <fullName evidence="1">Ribonuclease PH</fullName>
        <shortName evidence="1">RNase PH</shortName>
        <ecNumber evidence="1">2.7.7.56</ecNumber>
    </recommendedName>
    <alternativeName>
        <fullName evidence="1">tRNA nucleotidyltransferase</fullName>
    </alternativeName>
</protein>
<feature type="chain" id="PRO_1000024833" description="Ribonuclease PH">
    <location>
        <begin position="1"/>
        <end position="260"/>
    </location>
</feature>
<feature type="binding site" evidence="1">
    <location>
        <position position="88"/>
    </location>
    <ligand>
        <name>phosphate</name>
        <dbReference type="ChEBI" id="CHEBI:43474"/>
        <note>substrate</note>
    </ligand>
</feature>
<feature type="binding site" evidence="1">
    <location>
        <begin position="126"/>
        <end position="128"/>
    </location>
    <ligand>
        <name>phosphate</name>
        <dbReference type="ChEBI" id="CHEBI:43474"/>
        <note>substrate</note>
    </ligand>
</feature>
<organism>
    <name type="scientific">Mycobacterium sp. (strain MCS)</name>
    <dbReference type="NCBI Taxonomy" id="164756"/>
    <lineage>
        <taxon>Bacteria</taxon>
        <taxon>Bacillati</taxon>
        <taxon>Actinomycetota</taxon>
        <taxon>Actinomycetes</taxon>
        <taxon>Mycobacteriales</taxon>
        <taxon>Mycobacteriaceae</taxon>
        <taxon>Mycobacterium</taxon>
    </lineage>
</organism>